<keyword id="KW-1185">Reference proteome</keyword>
<keyword id="KW-0687">Ribonucleoprotein</keyword>
<keyword id="KW-0689">Ribosomal protein</keyword>
<dbReference type="EMBL" id="AE017354">
    <property type="protein sequence ID" value="AAU28708.1"/>
    <property type="molecule type" value="Genomic_DNA"/>
</dbReference>
<dbReference type="RefSeq" id="WP_010948350.1">
    <property type="nucleotide sequence ID" value="NC_002942.5"/>
</dbReference>
<dbReference type="RefSeq" id="YP_096655.1">
    <property type="nucleotide sequence ID" value="NC_002942.5"/>
</dbReference>
<dbReference type="SMR" id="Q5ZS69"/>
<dbReference type="STRING" id="272624.lpg2650"/>
<dbReference type="PaxDb" id="272624-lpg2650"/>
<dbReference type="GeneID" id="57036649"/>
<dbReference type="KEGG" id="lpn:lpg2650"/>
<dbReference type="PATRIC" id="fig|272624.6.peg.2828"/>
<dbReference type="eggNOG" id="COG0211">
    <property type="taxonomic scope" value="Bacteria"/>
</dbReference>
<dbReference type="HOGENOM" id="CLU_095424_4_1_6"/>
<dbReference type="OrthoDB" id="9803474at2"/>
<dbReference type="Proteomes" id="UP000000609">
    <property type="component" value="Chromosome"/>
</dbReference>
<dbReference type="GO" id="GO:0022625">
    <property type="term" value="C:cytosolic large ribosomal subunit"/>
    <property type="evidence" value="ECO:0007669"/>
    <property type="project" value="TreeGrafter"/>
</dbReference>
<dbReference type="GO" id="GO:0003735">
    <property type="term" value="F:structural constituent of ribosome"/>
    <property type="evidence" value="ECO:0007669"/>
    <property type="project" value="InterPro"/>
</dbReference>
<dbReference type="GO" id="GO:0006412">
    <property type="term" value="P:translation"/>
    <property type="evidence" value="ECO:0007669"/>
    <property type="project" value="UniProtKB-UniRule"/>
</dbReference>
<dbReference type="FunFam" id="2.40.50.100:FF:000001">
    <property type="entry name" value="50S ribosomal protein L27"/>
    <property type="match status" value="1"/>
</dbReference>
<dbReference type="Gene3D" id="2.40.50.100">
    <property type="match status" value="1"/>
</dbReference>
<dbReference type="HAMAP" id="MF_00539">
    <property type="entry name" value="Ribosomal_bL27"/>
    <property type="match status" value="1"/>
</dbReference>
<dbReference type="InterPro" id="IPR001684">
    <property type="entry name" value="Ribosomal_bL27"/>
</dbReference>
<dbReference type="InterPro" id="IPR018261">
    <property type="entry name" value="Ribosomal_bL27_CS"/>
</dbReference>
<dbReference type="NCBIfam" id="TIGR00062">
    <property type="entry name" value="L27"/>
    <property type="match status" value="1"/>
</dbReference>
<dbReference type="PANTHER" id="PTHR15893:SF0">
    <property type="entry name" value="LARGE RIBOSOMAL SUBUNIT PROTEIN BL27M"/>
    <property type="match status" value="1"/>
</dbReference>
<dbReference type="PANTHER" id="PTHR15893">
    <property type="entry name" value="RIBOSOMAL PROTEIN L27"/>
    <property type="match status" value="1"/>
</dbReference>
<dbReference type="Pfam" id="PF01016">
    <property type="entry name" value="Ribosomal_L27"/>
    <property type="match status" value="1"/>
</dbReference>
<dbReference type="PRINTS" id="PR00063">
    <property type="entry name" value="RIBOSOMALL27"/>
</dbReference>
<dbReference type="SUPFAM" id="SSF110324">
    <property type="entry name" value="Ribosomal L27 protein-like"/>
    <property type="match status" value="1"/>
</dbReference>
<dbReference type="PROSITE" id="PS00831">
    <property type="entry name" value="RIBOSOMAL_L27"/>
    <property type="match status" value="1"/>
</dbReference>
<sequence length="92" mass="10099">MAHKKAGGSTRNGRDSNPKYLGVKRFGGQFVNAGEIIVRQRGTRFHPGPGVGCGRDHTLYALVEGLVQFTTKGEKNRKYVTILPEQREEAAS</sequence>
<comment type="similarity">
    <text evidence="1">Belongs to the bacterial ribosomal protein bL27 family.</text>
</comment>
<reference key="1">
    <citation type="journal article" date="2004" name="Science">
        <title>The genomic sequence of the accidental pathogen Legionella pneumophila.</title>
        <authorList>
            <person name="Chien M."/>
            <person name="Morozova I."/>
            <person name="Shi S."/>
            <person name="Sheng H."/>
            <person name="Chen J."/>
            <person name="Gomez S.M."/>
            <person name="Asamani G."/>
            <person name="Hill K."/>
            <person name="Nuara J."/>
            <person name="Feder M."/>
            <person name="Rineer J."/>
            <person name="Greenberg J.J."/>
            <person name="Steshenko V."/>
            <person name="Park S.H."/>
            <person name="Zhao B."/>
            <person name="Teplitskaya E."/>
            <person name="Edwards J.R."/>
            <person name="Pampou S."/>
            <person name="Georghiou A."/>
            <person name="Chou I.-C."/>
            <person name="Iannuccilli W."/>
            <person name="Ulz M.E."/>
            <person name="Kim D.H."/>
            <person name="Geringer-Sameth A."/>
            <person name="Goldsberry C."/>
            <person name="Morozov P."/>
            <person name="Fischer S.G."/>
            <person name="Segal G."/>
            <person name="Qu X."/>
            <person name="Rzhetsky A."/>
            <person name="Zhang P."/>
            <person name="Cayanis E."/>
            <person name="De Jong P.J."/>
            <person name="Ju J."/>
            <person name="Kalachikov S."/>
            <person name="Shuman H.A."/>
            <person name="Russo J.J."/>
        </authorList>
    </citation>
    <scope>NUCLEOTIDE SEQUENCE [LARGE SCALE GENOMIC DNA]</scope>
    <source>
        <strain>Philadelphia 1 / ATCC 33152 / DSM 7513</strain>
    </source>
</reference>
<feature type="chain" id="PRO_0000181108" description="Large ribosomal subunit protein bL27">
    <location>
        <begin position="1"/>
        <end position="92"/>
    </location>
</feature>
<feature type="region of interest" description="Disordered" evidence="2">
    <location>
        <begin position="1"/>
        <end position="20"/>
    </location>
</feature>
<accession>Q5ZS69</accession>
<evidence type="ECO:0000255" key="1">
    <source>
        <dbReference type="HAMAP-Rule" id="MF_00539"/>
    </source>
</evidence>
<evidence type="ECO:0000256" key="2">
    <source>
        <dbReference type="SAM" id="MobiDB-lite"/>
    </source>
</evidence>
<evidence type="ECO:0000305" key="3"/>
<name>RL27_LEGPH</name>
<organism>
    <name type="scientific">Legionella pneumophila subsp. pneumophila (strain Philadelphia 1 / ATCC 33152 / DSM 7513)</name>
    <dbReference type="NCBI Taxonomy" id="272624"/>
    <lineage>
        <taxon>Bacteria</taxon>
        <taxon>Pseudomonadati</taxon>
        <taxon>Pseudomonadota</taxon>
        <taxon>Gammaproteobacteria</taxon>
        <taxon>Legionellales</taxon>
        <taxon>Legionellaceae</taxon>
        <taxon>Legionella</taxon>
    </lineage>
</organism>
<gene>
    <name evidence="1" type="primary">rpmA</name>
    <name type="ordered locus">lpg2650</name>
</gene>
<protein>
    <recommendedName>
        <fullName evidence="1">Large ribosomal subunit protein bL27</fullName>
    </recommendedName>
    <alternativeName>
        <fullName evidence="3">50S ribosomal protein L27</fullName>
    </alternativeName>
</protein>
<proteinExistence type="inferred from homology"/>